<protein>
    <recommendedName>
        <fullName>Uncharacterized protein TP_0966</fullName>
    </recommendedName>
</protein>
<comment type="similarity">
    <text evidence="3">Belongs to the TP096X family.</text>
</comment>
<proteinExistence type="inferred from homology"/>
<feature type="signal peptide" evidence="1">
    <location>
        <begin position="1"/>
        <end position="34"/>
    </location>
</feature>
<feature type="chain" id="PRO_0000014267" description="Uncharacterized protein TP_0966">
    <location>
        <begin position="35"/>
        <end position="544"/>
    </location>
</feature>
<feature type="region of interest" description="Disordered" evidence="2">
    <location>
        <begin position="38"/>
        <end position="69"/>
    </location>
</feature>
<reference key="1">
    <citation type="journal article" date="1998" name="Science">
        <title>Complete genome sequence of Treponema pallidum, the syphilis spirochete.</title>
        <authorList>
            <person name="Fraser C.M."/>
            <person name="Norris S.J."/>
            <person name="Weinstock G.M."/>
            <person name="White O."/>
            <person name="Sutton G.G."/>
            <person name="Dodson R.J."/>
            <person name="Gwinn M.L."/>
            <person name="Hickey E.K."/>
            <person name="Clayton R.A."/>
            <person name="Ketchum K.A."/>
            <person name="Sodergren E."/>
            <person name="Hardham J.M."/>
            <person name="McLeod M.P."/>
            <person name="Salzberg S.L."/>
            <person name="Peterson J.D."/>
            <person name="Khalak H.G."/>
            <person name="Richardson D.L."/>
            <person name="Howell J.K."/>
            <person name="Chidambaram M."/>
            <person name="Utterback T.R."/>
            <person name="McDonald L.A."/>
            <person name="Artiach P."/>
            <person name="Bowman C."/>
            <person name="Cotton M.D."/>
            <person name="Fujii C."/>
            <person name="Garland S.A."/>
            <person name="Hatch B."/>
            <person name="Horst K."/>
            <person name="Roberts K.M."/>
            <person name="Sandusky M."/>
            <person name="Weidman J.F."/>
            <person name="Smith H.O."/>
            <person name="Venter J.C."/>
        </authorList>
    </citation>
    <scope>NUCLEOTIDE SEQUENCE [LARGE SCALE GENOMIC DNA]</scope>
    <source>
        <strain>Nichols</strain>
    </source>
</reference>
<name>Y966_TREPA</name>
<dbReference type="EMBL" id="AE000520">
    <property type="protein sequence ID" value="AAC65924.1"/>
    <property type="molecule type" value="Genomic_DNA"/>
</dbReference>
<dbReference type="PIR" id="A71260">
    <property type="entry name" value="A71260"/>
</dbReference>
<dbReference type="RefSeq" id="WP_010882410.1">
    <property type="nucleotide sequence ID" value="NC_021490.2"/>
</dbReference>
<dbReference type="IntAct" id="O83932">
    <property type="interactions" value="2"/>
</dbReference>
<dbReference type="STRING" id="243276.TP_0966"/>
<dbReference type="EnsemblBacteria" id="AAC65924">
    <property type="protein sequence ID" value="AAC65924"/>
    <property type="gene ID" value="TP_0966"/>
</dbReference>
<dbReference type="KEGG" id="tpa:TP_0966"/>
<dbReference type="KEGG" id="tpw:TPANIC_0966"/>
<dbReference type="eggNOG" id="ENOG5032M6Q">
    <property type="taxonomic scope" value="Bacteria"/>
</dbReference>
<dbReference type="HOGENOM" id="CLU_499595_0_0_12"/>
<dbReference type="Proteomes" id="UP000000811">
    <property type="component" value="Chromosome"/>
</dbReference>
<sequence length="544" mass="60148">MIARRMLCARPWGPSCVVCALCGALAALVPAVGAQEQAVPAPGTPAPPAHTASEAVPPAPEPRAEGEQPSPLVPTALPVPGGAVAARAAPGTVGPRLWEQLLQWRVQHGDEHQAPQMAYEIAANNYDIALVKSIVDLRMGTGHIHHNLNGNGAGGMANGTPTLSPYVHLFFPTYQNLSLKADIAIKTNTPSADVTALFGMDLYSKVRRQHQLQVRRARNSMLDAFAAHLRGQHAAREAFLAELDELLSAYSTLLEAQVTEQECTRLVRTMRIQRYQAHSVKLRSATLKHARAERVARRARKTFTALYQDFVRKCGAFEGNDPETFMLHLAQVVPQEPVSSTALLSVENDWEFLKNREDLETQAEARAVDAISYGFNVESGVGSEGKSLKRILANVRMDFPGGGFWLGLNLPYPQWSRVEVKFRLTWDPLSIKYQELSRQTLQLHERLSALKLQDAYEASERKVLGLRHTAESLGWEQEAALTELNILRRSAQTHQKWLERGAIGAHQHARAQHAYLQALITLAKINIKILKFNLETASSFRPVL</sequence>
<accession>O83932</accession>
<organism>
    <name type="scientific">Treponema pallidum (strain Nichols)</name>
    <dbReference type="NCBI Taxonomy" id="243276"/>
    <lineage>
        <taxon>Bacteria</taxon>
        <taxon>Pseudomonadati</taxon>
        <taxon>Spirochaetota</taxon>
        <taxon>Spirochaetia</taxon>
        <taxon>Spirochaetales</taxon>
        <taxon>Treponemataceae</taxon>
        <taxon>Treponema</taxon>
    </lineage>
</organism>
<evidence type="ECO:0000255" key="1"/>
<evidence type="ECO:0000256" key="2">
    <source>
        <dbReference type="SAM" id="MobiDB-lite"/>
    </source>
</evidence>
<evidence type="ECO:0000305" key="3"/>
<gene>
    <name type="ordered locus">TP_0966</name>
</gene>
<keyword id="KW-1185">Reference proteome</keyword>
<keyword id="KW-0732">Signal</keyword>